<proteinExistence type="evidence at protein level"/>
<reference key="1">
    <citation type="journal article" date="2005" name="Nature">
        <title>Genomic sequence of the pathogenic and allergenic filamentous fungus Aspergillus fumigatus.</title>
        <authorList>
            <person name="Nierman W.C."/>
            <person name="Pain A."/>
            <person name="Anderson M.J."/>
            <person name="Wortman J.R."/>
            <person name="Kim H.S."/>
            <person name="Arroyo J."/>
            <person name="Berriman M."/>
            <person name="Abe K."/>
            <person name="Archer D.B."/>
            <person name="Bermejo C."/>
            <person name="Bennett J.W."/>
            <person name="Bowyer P."/>
            <person name="Chen D."/>
            <person name="Collins M."/>
            <person name="Coulsen R."/>
            <person name="Davies R."/>
            <person name="Dyer P.S."/>
            <person name="Farman M.L."/>
            <person name="Fedorova N."/>
            <person name="Fedorova N.D."/>
            <person name="Feldblyum T.V."/>
            <person name="Fischer R."/>
            <person name="Fosker N."/>
            <person name="Fraser A."/>
            <person name="Garcia J.L."/>
            <person name="Garcia M.J."/>
            <person name="Goble A."/>
            <person name="Goldman G.H."/>
            <person name="Gomi K."/>
            <person name="Griffith-Jones S."/>
            <person name="Gwilliam R."/>
            <person name="Haas B.J."/>
            <person name="Haas H."/>
            <person name="Harris D.E."/>
            <person name="Horiuchi H."/>
            <person name="Huang J."/>
            <person name="Humphray S."/>
            <person name="Jimenez J."/>
            <person name="Keller N."/>
            <person name="Khouri H."/>
            <person name="Kitamoto K."/>
            <person name="Kobayashi T."/>
            <person name="Konzack S."/>
            <person name="Kulkarni R."/>
            <person name="Kumagai T."/>
            <person name="Lafton A."/>
            <person name="Latge J.-P."/>
            <person name="Li W."/>
            <person name="Lord A."/>
            <person name="Lu C."/>
            <person name="Majoros W.H."/>
            <person name="May G.S."/>
            <person name="Miller B.L."/>
            <person name="Mohamoud Y."/>
            <person name="Molina M."/>
            <person name="Monod M."/>
            <person name="Mouyna I."/>
            <person name="Mulligan S."/>
            <person name="Murphy L.D."/>
            <person name="O'Neil S."/>
            <person name="Paulsen I."/>
            <person name="Penalva M.A."/>
            <person name="Pertea M."/>
            <person name="Price C."/>
            <person name="Pritchard B.L."/>
            <person name="Quail M.A."/>
            <person name="Rabbinowitsch E."/>
            <person name="Rawlins N."/>
            <person name="Rajandream M.A."/>
            <person name="Reichard U."/>
            <person name="Renauld H."/>
            <person name="Robson G.D."/>
            <person name="Rodriguez de Cordoba S."/>
            <person name="Rodriguez-Pena J.M."/>
            <person name="Ronning C.M."/>
            <person name="Rutter S."/>
            <person name="Salzberg S.L."/>
            <person name="Sanchez M."/>
            <person name="Sanchez-Ferrero J.C."/>
            <person name="Saunders D."/>
            <person name="Seeger K."/>
            <person name="Squares R."/>
            <person name="Squares S."/>
            <person name="Takeuchi M."/>
            <person name="Tekaia F."/>
            <person name="Turner G."/>
            <person name="Vazquez de Aldana C.R."/>
            <person name="Weidman J."/>
            <person name="White O."/>
            <person name="Woodward J.R."/>
            <person name="Yu J.-H."/>
            <person name="Fraser C.M."/>
            <person name="Galagan J.E."/>
            <person name="Asai K."/>
            <person name="Machida M."/>
            <person name="Hall N."/>
            <person name="Barrell B.G."/>
            <person name="Denning D.W."/>
        </authorList>
    </citation>
    <scope>NUCLEOTIDE SEQUENCE [LARGE SCALE GENOMIC DNA]</scope>
    <source>
        <strain>ATCC MYA-4609 / CBS 101355 / FGSC A1100 / Af293</strain>
    </source>
</reference>
<reference key="2">
    <citation type="journal article" date="2008" name="Eukaryot. Cell">
        <title>Calcineurin target CrzA regulates conidial germination, hyphal growth, and pathogenesis of Aspergillus fumigatus.</title>
        <authorList>
            <person name="Cramer R.A. Jr."/>
            <person name="Perfect B.Z."/>
            <person name="Pinchai N."/>
            <person name="Park S."/>
            <person name="Perlin D.S."/>
            <person name="Asfaw Y.G."/>
            <person name="Heitman J."/>
            <person name="Perfect J.R."/>
            <person name="Steinbach W.J."/>
        </authorList>
    </citation>
    <scope>FUNCTION</scope>
    <scope>DISRUPTION PHENOTYPE</scope>
</reference>
<reference key="3">
    <citation type="journal article" date="2008" name="Mol. Microbiol.">
        <title>Functional characterization of the Aspergillus fumigatus CRZ1 homologue, CrzA.</title>
        <authorList>
            <person name="Soriani F.M."/>
            <person name="Malavazi I."/>
            <person name="da Silva Ferreira M.E."/>
            <person name="Savoldi M."/>
            <person name="Von Zeska Kress M.R."/>
            <person name="de Souza Goldman M.H."/>
            <person name="Loss O."/>
            <person name="Bignell E."/>
            <person name="Goldman G.H."/>
        </authorList>
    </citation>
    <scope>FUNCTION</scope>
    <scope>DISRUPTION PHENOTYPE</scope>
    <scope>SUBCELLULAR LOCATION</scope>
</reference>
<reference key="4">
    <citation type="journal article" date="2009" name="Antimicrob. Agents Chemother.">
        <title>Differential effects of inhibiting chitin and 1,3-{beta}-D-glucan synthesis in ras and calcineurin mutants of Aspergillus fumigatus.</title>
        <authorList>
            <person name="Fortwendel J.R."/>
            <person name="Juvvadi P.R."/>
            <person name="Pinchai N."/>
            <person name="Perfect B.Z."/>
            <person name="Alspaugh J.A."/>
            <person name="Perfect J.R."/>
            <person name="Steinbach W.J."/>
        </authorList>
    </citation>
    <scope>FUNCTION</scope>
    <scope>DISRUPTION PHENOTYPE</scope>
</reference>
<reference key="5">
    <citation type="journal article" date="2010" name="BMC Microbiol.">
        <title>Identification of possible targets of the Aspergillus fumigatus CRZ1 homologue, CrzA.</title>
        <authorList>
            <person name="Soriani F.M."/>
            <person name="Malavazi I."/>
            <person name="Savoldi M."/>
            <person name="Espeso E."/>
            <person name="Dinamarco T.M."/>
            <person name="Bernardes L.A."/>
            <person name="Ferreira M.E."/>
            <person name="Goldman M.H."/>
            <person name="Goldman G.H."/>
        </authorList>
    </citation>
    <scope>FUNCTION</scope>
</reference>
<reference key="6">
    <citation type="journal article" date="2012" name="PLoS ONE">
        <title>Functional characterization of an Aspergillus fumigatus calcium transporter (PmcA) that is essential for fungal infection.</title>
        <authorList>
            <person name="Dinamarco T.M."/>
            <person name="Freitas F.Z."/>
            <person name="Almeida R.S."/>
            <person name="Brown N.A."/>
            <person name="dos Reis T.F."/>
            <person name="Ramalho L.N."/>
            <person name="Savoldi M."/>
            <person name="Goldman M.H."/>
            <person name="Bertolini M.C."/>
            <person name="Goldman G.H."/>
        </authorList>
    </citation>
    <scope>FUNCTION</scope>
</reference>
<reference key="7">
    <citation type="journal article" date="2014" name="Mol. Microbiol.">
        <title>ChIP-seq reveals a role for CrzA in the Aspergillus fumigatus high-osmolarity glycerol response (HOG) signalling pathway.</title>
        <authorList>
            <person name="de Castro P.A."/>
            <person name="Chen C."/>
            <person name="de Almeida R.S."/>
            <person name="Freitas F.Z."/>
            <person name="Bertolini M.C."/>
            <person name="Morais E.R."/>
            <person name="Brown N.A."/>
            <person name="Ramalho L.N."/>
            <person name="Hagiwara D."/>
            <person name="Mitchell T.K."/>
            <person name="Goldman G.H."/>
        </authorList>
    </citation>
    <scope>FUNCTION</scope>
    <scope>PROMOTER-BINDING</scope>
</reference>
<sequence length="754" mass="81905">MASQEMFPELGQSPAPGVKSRGVSRSPHPHQQQQQQQHQQHQGQFTGTVTGLDLDSSIATASSFANSSFDPNSNNVSPSAESYGYTAAGYLSGTPASQTDQNYANSLQIPQSYGTGLVPQFNESRGLPIQQQSQQQHHQQPSLDDNFSDLLNSNATEYDFNTVYQTHSPSSNTAPEYDSSLLLDPQVHQQSHPTQIPSSHSSTSPQISPLEQQQHSSPGPMSTQGSTTVAYYTPQHSRHASLDPATAAFLTSNTHPDWQAVMGNSAAFQGHRRAPSEVSEISSAAPSPYLSQHESFDGVDNNPSPLLAPQNDPSLYDSALGIENFTLSEQHQQHQGFSPAHSPYISPRLMPQQGQEMMPNVPYLSGPAPNTQYPTPPNDMYGNGAEGMMNMSQGTHPSVDIGQASQMAPPSINVEFAPPSRIPSFGPSKPASNLDSLSPPPSSTRSRGRSKSDPYAHPSTSRLRSSSTSSSLDPLAPTTPRSLSPFDSFGRQQQSNPSSRDPSPSRSNRRLSTSSIDSRNYILGLADPQRPGASPNDSKRVQKHPATFQCNLCPKRFTRAYNLRSHLRTHTDERPFVCTVCGKAFARQHDRKRHEGLHSGEKKFVCQGELSRGGQWGCGRRFARADALGRHFRSEAGRICIKPLLDEESQERERSLMDQQQHHLQPLPQQVMVPVDNPHAGNFVLPAALLAQYPALQTLQWDQIAASADDPSDIGGRSSFDASSGNEFGFEDDDSGLSSVSGINAGYSAAGNFY</sequence>
<gene>
    <name evidence="9 10" type="primary">crzA</name>
    <name type="ORF">AFUA_1G06900</name>
</gene>
<organism>
    <name type="scientific">Aspergillus fumigatus (strain ATCC MYA-4609 / CBS 101355 / FGSC A1100 / Af293)</name>
    <name type="common">Neosartorya fumigata</name>
    <dbReference type="NCBI Taxonomy" id="330879"/>
    <lineage>
        <taxon>Eukaryota</taxon>
        <taxon>Fungi</taxon>
        <taxon>Dikarya</taxon>
        <taxon>Ascomycota</taxon>
        <taxon>Pezizomycotina</taxon>
        <taxon>Eurotiomycetes</taxon>
        <taxon>Eurotiomycetidae</taxon>
        <taxon>Eurotiales</taxon>
        <taxon>Aspergillaceae</taxon>
        <taxon>Aspergillus</taxon>
        <taxon>Aspergillus subgen. Fumigati</taxon>
    </lineage>
</organism>
<comment type="function">
    <text evidence="3 4 5 6 7 8">Transcription factor involved in the regulation of calcium ion homeostasis (PubMed:18298443). Regulates genes encoding calcium transporters, transcription factors and genes that could be directly or indirectly involved in calcium metabolism (PubMed:20078882). Supports especially pmcA, pmcB and pmcC expression encoding for calcium-translocating P-type ATPases (PubMed:18298443, PubMed:22649543). Binds target promoters at motif A[GT][CG]CA[AC][AG] (PubMed:25196896). Plays an essential role germination, radial growth, and asexual development (PubMed:18298443, PubMed:18456861). Also plays a major role in proper chitin and glucan incorporation into the cell wall (PubMed:19015336). Involved in the high-osmolarity glycerol response (HOG) signaling pathway (PubMed:25196896). Required for pathogenicity in an experimental murine model of invasive pulmonary aspergillosis (PubMed:18298443, PubMed:18456861, PubMed:22649543, PubMed:25196896).</text>
</comment>
<comment type="subcellular location">
    <subcellularLocation>
        <location evidence="3">Nucleus</location>
    </subcellularLocation>
    <subcellularLocation>
        <location evidence="3">Cytoplasm</location>
    </subcellularLocation>
    <text evidence="3">Localizes predominantly to the cytosol of the cell in the absence of added calcium and translocates to the nucleus following exposure to CaCl(2).</text>
</comment>
<comment type="disruption phenotype">
    <text evidence="3 4">Leads to reduced levels of beta-1,3-glucan in the cell wall and impairs pathogenicity in an experimental murine model of invasive pulmonary aspergillosis (PubMed:18298443, PubMed:18456861, PubMed:19015336). Increases sensitivity to heat shock (PubMed:18298443).</text>
</comment>
<keyword id="KW-0963">Cytoplasm</keyword>
<keyword id="KW-0479">Metal-binding</keyword>
<keyword id="KW-0539">Nucleus</keyword>
<keyword id="KW-1185">Reference proteome</keyword>
<keyword id="KW-0677">Repeat</keyword>
<keyword id="KW-0804">Transcription</keyword>
<keyword id="KW-0805">Transcription regulation</keyword>
<keyword id="KW-0843">Virulence</keyword>
<keyword id="KW-0862">Zinc</keyword>
<keyword id="KW-0863">Zinc-finger</keyword>
<feature type="chain" id="PRO_0000435644" description="C2H2 finger domain transcription factor crzA">
    <location>
        <begin position="1"/>
        <end position="754"/>
    </location>
</feature>
<feature type="zinc finger region" description="C2H2-type 1" evidence="1">
    <location>
        <begin position="548"/>
        <end position="570"/>
    </location>
</feature>
<feature type="zinc finger region" description="C2H2-type 2" evidence="1">
    <location>
        <begin position="576"/>
        <end position="598"/>
    </location>
</feature>
<feature type="zinc finger region" description="C2H2-type 3; degenerate" evidence="1">
    <location>
        <begin position="604"/>
        <end position="635"/>
    </location>
</feature>
<feature type="region of interest" description="Disordered" evidence="2">
    <location>
        <begin position="1"/>
        <end position="51"/>
    </location>
</feature>
<feature type="region of interest" description="Disordered" evidence="2">
    <location>
        <begin position="63"/>
        <end position="150"/>
    </location>
</feature>
<feature type="region of interest" description="Disordered" evidence="2">
    <location>
        <begin position="187"/>
        <end position="227"/>
    </location>
</feature>
<feature type="region of interest" description="Disordered" evidence="2">
    <location>
        <begin position="269"/>
        <end position="299"/>
    </location>
</feature>
<feature type="region of interest" description="Disordered" evidence="2">
    <location>
        <begin position="384"/>
        <end position="543"/>
    </location>
</feature>
<feature type="region of interest" description="Disordered" evidence="2">
    <location>
        <begin position="708"/>
        <end position="737"/>
    </location>
</feature>
<feature type="compositionally biased region" description="Low complexity" evidence="2">
    <location>
        <begin position="30"/>
        <end position="44"/>
    </location>
</feature>
<feature type="compositionally biased region" description="Polar residues" evidence="2">
    <location>
        <begin position="63"/>
        <end position="80"/>
    </location>
</feature>
<feature type="compositionally biased region" description="Polar residues" evidence="2">
    <location>
        <begin position="94"/>
        <end position="114"/>
    </location>
</feature>
<feature type="compositionally biased region" description="Low complexity" evidence="2">
    <location>
        <begin position="130"/>
        <end position="140"/>
    </location>
</feature>
<feature type="compositionally biased region" description="Polar residues" evidence="2">
    <location>
        <begin position="141"/>
        <end position="150"/>
    </location>
</feature>
<feature type="compositionally biased region" description="Low complexity" evidence="2">
    <location>
        <begin position="189"/>
        <end position="209"/>
    </location>
</feature>
<feature type="compositionally biased region" description="Polar residues" evidence="2">
    <location>
        <begin position="210"/>
        <end position="227"/>
    </location>
</feature>
<feature type="compositionally biased region" description="Polar residues" evidence="2">
    <location>
        <begin position="279"/>
        <end position="293"/>
    </location>
</feature>
<feature type="compositionally biased region" description="Low complexity" evidence="2">
    <location>
        <begin position="459"/>
        <end position="472"/>
    </location>
</feature>
<feature type="compositionally biased region" description="Low complexity" evidence="2">
    <location>
        <begin position="491"/>
        <end position="515"/>
    </location>
</feature>
<dbReference type="EMBL" id="AAHF01000007">
    <property type="protein sequence ID" value="EAL88401.1"/>
    <property type="molecule type" value="Genomic_DNA"/>
</dbReference>
<dbReference type="RefSeq" id="XP_750439.1">
    <property type="nucleotide sequence ID" value="XM_745346.1"/>
</dbReference>
<dbReference type="STRING" id="330879.Q4WJ81"/>
<dbReference type="EnsemblFungi" id="EAL88401">
    <property type="protein sequence ID" value="EAL88401"/>
    <property type="gene ID" value="AFUA_1G06900"/>
</dbReference>
<dbReference type="GeneID" id="3507698"/>
<dbReference type="KEGG" id="afm:AFUA_1G06900"/>
<dbReference type="VEuPathDB" id="FungiDB:Afu1g06900"/>
<dbReference type="eggNOG" id="KOG1721">
    <property type="taxonomic scope" value="Eukaryota"/>
</dbReference>
<dbReference type="HOGENOM" id="CLU_014490_0_0_1"/>
<dbReference type="InParanoid" id="Q4WJ81"/>
<dbReference type="OMA" id="SFQGHRR"/>
<dbReference type="OrthoDB" id="8117402at2759"/>
<dbReference type="PHI-base" id="PHI:2509"/>
<dbReference type="PHI-base" id="PHI:9081"/>
<dbReference type="Proteomes" id="UP000002530">
    <property type="component" value="Chromosome 1"/>
</dbReference>
<dbReference type="GO" id="GO:0005737">
    <property type="term" value="C:cytoplasm"/>
    <property type="evidence" value="ECO:0000314"/>
    <property type="project" value="AspGD"/>
</dbReference>
<dbReference type="GO" id="GO:0005634">
    <property type="term" value="C:nucleus"/>
    <property type="evidence" value="ECO:0000314"/>
    <property type="project" value="AspGD"/>
</dbReference>
<dbReference type="GO" id="GO:0000981">
    <property type="term" value="F:DNA-binding transcription factor activity, RNA polymerase II-specific"/>
    <property type="evidence" value="ECO:0000318"/>
    <property type="project" value="GO_Central"/>
</dbReference>
<dbReference type="GO" id="GO:0000978">
    <property type="term" value="F:RNA polymerase II cis-regulatory region sequence-specific DNA binding"/>
    <property type="evidence" value="ECO:0000318"/>
    <property type="project" value="GO_Central"/>
</dbReference>
<dbReference type="GO" id="GO:0008270">
    <property type="term" value="F:zinc ion binding"/>
    <property type="evidence" value="ECO:0007669"/>
    <property type="project" value="UniProtKB-KW"/>
</dbReference>
<dbReference type="GO" id="GO:0071277">
    <property type="term" value="P:cellular response to calcium ion"/>
    <property type="evidence" value="ECO:0000315"/>
    <property type="project" value="AspGD"/>
</dbReference>
<dbReference type="GO" id="GO:0048315">
    <property type="term" value="P:conidium formation"/>
    <property type="evidence" value="ECO:0000315"/>
    <property type="project" value="AspGD"/>
</dbReference>
<dbReference type="GO" id="GO:0045944">
    <property type="term" value="P:positive regulation of transcription by RNA polymerase II"/>
    <property type="evidence" value="ECO:0000315"/>
    <property type="project" value="AspGD"/>
</dbReference>
<dbReference type="GO" id="GO:0006355">
    <property type="term" value="P:regulation of DNA-templated transcription"/>
    <property type="evidence" value="ECO:0000318"/>
    <property type="project" value="GO_Central"/>
</dbReference>
<dbReference type="GO" id="GO:0009847">
    <property type="term" value="P:spore germination"/>
    <property type="evidence" value="ECO:0000315"/>
    <property type="project" value="AspGD"/>
</dbReference>
<dbReference type="GO" id="GO:0009826">
    <property type="term" value="P:unidimensional cell growth"/>
    <property type="evidence" value="ECO:0000315"/>
    <property type="project" value="AspGD"/>
</dbReference>
<dbReference type="FunFam" id="3.30.160.60:FF:000146">
    <property type="entry name" value="C2H2 type zinc finger protein"/>
    <property type="match status" value="1"/>
</dbReference>
<dbReference type="FunFam" id="3.30.160.60:FF:000181">
    <property type="entry name" value="C2H2 type zinc finger protein"/>
    <property type="match status" value="1"/>
</dbReference>
<dbReference type="FunFam" id="3.30.160.60:FF:000239">
    <property type="entry name" value="C2H2 type zinc finger protein"/>
    <property type="match status" value="1"/>
</dbReference>
<dbReference type="Gene3D" id="3.30.160.60">
    <property type="entry name" value="Classic Zinc Finger"/>
    <property type="match status" value="3"/>
</dbReference>
<dbReference type="InterPro" id="IPR050527">
    <property type="entry name" value="Snail/Krueppel_Znf"/>
</dbReference>
<dbReference type="InterPro" id="IPR036236">
    <property type="entry name" value="Znf_C2H2_sf"/>
</dbReference>
<dbReference type="InterPro" id="IPR013087">
    <property type="entry name" value="Znf_C2H2_type"/>
</dbReference>
<dbReference type="PANTHER" id="PTHR24388:SF54">
    <property type="entry name" value="PROTEIN ESCARGOT"/>
    <property type="match status" value="1"/>
</dbReference>
<dbReference type="PANTHER" id="PTHR24388">
    <property type="entry name" value="ZINC FINGER PROTEIN"/>
    <property type="match status" value="1"/>
</dbReference>
<dbReference type="Pfam" id="PF00096">
    <property type="entry name" value="zf-C2H2"/>
    <property type="match status" value="2"/>
</dbReference>
<dbReference type="SMART" id="SM00355">
    <property type="entry name" value="ZnF_C2H2"/>
    <property type="match status" value="2"/>
</dbReference>
<dbReference type="SUPFAM" id="SSF57667">
    <property type="entry name" value="beta-beta-alpha zinc fingers"/>
    <property type="match status" value="1"/>
</dbReference>
<dbReference type="PROSITE" id="PS00028">
    <property type="entry name" value="ZINC_FINGER_C2H2_1"/>
    <property type="match status" value="2"/>
</dbReference>
<dbReference type="PROSITE" id="PS50157">
    <property type="entry name" value="ZINC_FINGER_C2H2_2"/>
    <property type="match status" value="2"/>
</dbReference>
<name>CRZA_ASPFU</name>
<accession>Q4WJ81</accession>
<evidence type="ECO:0000255" key="1">
    <source>
        <dbReference type="PROSITE-ProRule" id="PRU00042"/>
    </source>
</evidence>
<evidence type="ECO:0000256" key="2">
    <source>
        <dbReference type="SAM" id="MobiDB-lite"/>
    </source>
</evidence>
<evidence type="ECO:0000269" key="3">
    <source>
    </source>
</evidence>
<evidence type="ECO:0000269" key="4">
    <source>
    </source>
</evidence>
<evidence type="ECO:0000269" key="5">
    <source>
    </source>
</evidence>
<evidence type="ECO:0000269" key="6">
    <source>
    </source>
</evidence>
<evidence type="ECO:0000269" key="7">
    <source>
    </source>
</evidence>
<evidence type="ECO:0000269" key="8">
    <source>
    </source>
</evidence>
<evidence type="ECO:0000303" key="9">
    <source>
    </source>
</evidence>
<evidence type="ECO:0000303" key="10">
    <source>
    </source>
</evidence>
<evidence type="ECO:0000305" key="11"/>
<protein>
    <recommendedName>
        <fullName evidence="11">C2H2 finger domain transcription factor crzA</fullName>
    </recommendedName>
</protein>